<feature type="chain" id="PRO_1000148628" description="ATP synthase gamma chain">
    <location>
        <begin position="1"/>
        <end position="305"/>
    </location>
</feature>
<comment type="function">
    <text evidence="1">Produces ATP from ADP in the presence of a proton gradient across the membrane. The gamma chain is believed to be important in regulating ATPase activity and the flow of protons through the CF(0) complex.</text>
</comment>
<comment type="subunit">
    <text evidence="1">F-type ATPases have 2 components, CF(1) - the catalytic core - and CF(0) - the membrane proton channel. CF(1) has five subunits: alpha(3), beta(3), gamma(1), delta(1), epsilon(1). CF(0) has three main subunits: a, b and c.</text>
</comment>
<comment type="subcellular location">
    <subcellularLocation>
        <location evidence="1">Cell membrane</location>
        <topology evidence="1">Peripheral membrane protein</topology>
    </subcellularLocation>
</comment>
<comment type="similarity">
    <text evidence="1">Belongs to the ATPase gamma chain family.</text>
</comment>
<evidence type="ECO:0000255" key="1">
    <source>
        <dbReference type="HAMAP-Rule" id="MF_00815"/>
    </source>
</evidence>
<keyword id="KW-0066">ATP synthesis</keyword>
<keyword id="KW-1003">Cell membrane</keyword>
<keyword id="KW-0139">CF(1)</keyword>
<keyword id="KW-0375">Hydrogen ion transport</keyword>
<keyword id="KW-0406">Ion transport</keyword>
<keyword id="KW-0472">Membrane</keyword>
<keyword id="KW-0813">Transport</keyword>
<organism>
    <name type="scientific">Mycobacterium bovis (strain BCG / Tokyo 172 / ATCC 35737 / TMC 1019)</name>
    <dbReference type="NCBI Taxonomy" id="561275"/>
    <lineage>
        <taxon>Bacteria</taxon>
        <taxon>Bacillati</taxon>
        <taxon>Actinomycetota</taxon>
        <taxon>Actinomycetes</taxon>
        <taxon>Mycobacteriales</taxon>
        <taxon>Mycobacteriaceae</taxon>
        <taxon>Mycobacterium</taxon>
        <taxon>Mycobacterium tuberculosis complex</taxon>
    </lineage>
</organism>
<accession>C1AMV3</accession>
<proteinExistence type="inferred from homology"/>
<reference key="1">
    <citation type="journal article" date="2009" name="Vaccine">
        <title>Whole genome sequence analysis of Mycobacterium bovis bacillus Calmette-Guerin (BCG) Tokyo 172: a comparative study of BCG vaccine substrains.</title>
        <authorList>
            <person name="Seki M."/>
            <person name="Honda I."/>
            <person name="Fujita I."/>
            <person name="Yano I."/>
            <person name="Yamamoto S."/>
            <person name="Koyama A."/>
        </authorList>
    </citation>
    <scope>NUCLEOTIDE SEQUENCE [LARGE SCALE GENOMIC DNA]</scope>
    <source>
        <strain>BCG / Tokyo 172 / ATCC 35737 / TMC 1019</strain>
    </source>
</reference>
<gene>
    <name evidence="1" type="primary">atpG</name>
    <name type="ordered locus">JTY_1344</name>
</gene>
<sequence>MAATLRELRGRIRSAGSIKKITKAQELIATSRIARAQARLESARPYAFEITRMLTTLAAEAALDHPLLVERPEPKRAGVLVVSSDRGLCGAYNANIFRRSEELFSLLREAGKQPVLYVVGRKAQNYYSFRNWNITESWMGFSEQPTYENAAEIASTLVDAFLLGTDNGEDQRSDSGEGVDELHIVYTEFKSMLSQSAEAHRIAPMVVEYVEEDIGPRTLYSFEPDATMLFESLLPRYLTTRVYAALLESAASELASRQRAMKSATDNADDLIKALTLMANRERQAQITQEISEIVGGANALAEAR</sequence>
<dbReference type="EMBL" id="AP010918">
    <property type="protein sequence ID" value="BAH25632.1"/>
    <property type="molecule type" value="Genomic_DNA"/>
</dbReference>
<dbReference type="RefSeq" id="WP_003898819.1">
    <property type="nucleotide sequence ID" value="NZ_CP014566.1"/>
</dbReference>
<dbReference type="SMR" id="C1AMV3"/>
<dbReference type="KEGG" id="mbt:JTY_1344"/>
<dbReference type="HOGENOM" id="CLU_050669_0_0_11"/>
<dbReference type="GO" id="GO:0005886">
    <property type="term" value="C:plasma membrane"/>
    <property type="evidence" value="ECO:0007669"/>
    <property type="project" value="UniProtKB-SubCell"/>
</dbReference>
<dbReference type="GO" id="GO:0045259">
    <property type="term" value="C:proton-transporting ATP synthase complex"/>
    <property type="evidence" value="ECO:0007669"/>
    <property type="project" value="UniProtKB-KW"/>
</dbReference>
<dbReference type="GO" id="GO:0005524">
    <property type="term" value="F:ATP binding"/>
    <property type="evidence" value="ECO:0007669"/>
    <property type="project" value="UniProtKB-UniRule"/>
</dbReference>
<dbReference type="GO" id="GO:0046933">
    <property type="term" value="F:proton-transporting ATP synthase activity, rotational mechanism"/>
    <property type="evidence" value="ECO:0007669"/>
    <property type="project" value="UniProtKB-UniRule"/>
</dbReference>
<dbReference type="GO" id="GO:0042777">
    <property type="term" value="P:proton motive force-driven plasma membrane ATP synthesis"/>
    <property type="evidence" value="ECO:0007669"/>
    <property type="project" value="UniProtKB-UniRule"/>
</dbReference>
<dbReference type="CDD" id="cd12151">
    <property type="entry name" value="F1-ATPase_gamma"/>
    <property type="match status" value="1"/>
</dbReference>
<dbReference type="FunFam" id="3.40.1380.10:FF:000010">
    <property type="entry name" value="ATP synthase gamma chain"/>
    <property type="match status" value="1"/>
</dbReference>
<dbReference type="Gene3D" id="3.40.1380.10">
    <property type="match status" value="1"/>
</dbReference>
<dbReference type="Gene3D" id="1.10.287.80">
    <property type="entry name" value="ATP synthase, gamma subunit, helix hairpin domain"/>
    <property type="match status" value="1"/>
</dbReference>
<dbReference type="HAMAP" id="MF_00815">
    <property type="entry name" value="ATP_synth_gamma_bact"/>
    <property type="match status" value="1"/>
</dbReference>
<dbReference type="InterPro" id="IPR035968">
    <property type="entry name" value="ATP_synth_F1_ATPase_gsu"/>
</dbReference>
<dbReference type="InterPro" id="IPR000131">
    <property type="entry name" value="ATP_synth_F1_gsu"/>
</dbReference>
<dbReference type="InterPro" id="IPR023632">
    <property type="entry name" value="ATP_synth_F1_gsu_CS"/>
</dbReference>
<dbReference type="NCBIfam" id="TIGR01146">
    <property type="entry name" value="ATPsyn_F1gamma"/>
    <property type="match status" value="1"/>
</dbReference>
<dbReference type="NCBIfam" id="NF004145">
    <property type="entry name" value="PRK05621.1-2"/>
    <property type="match status" value="1"/>
</dbReference>
<dbReference type="PANTHER" id="PTHR11693">
    <property type="entry name" value="ATP SYNTHASE GAMMA CHAIN"/>
    <property type="match status" value="1"/>
</dbReference>
<dbReference type="PANTHER" id="PTHR11693:SF22">
    <property type="entry name" value="ATP SYNTHASE SUBUNIT GAMMA, MITOCHONDRIAL"/>
    <property type="match status" value="1"/>
</dbReference>
<dbReference type="Pfam" id="PF00231">
    <property type="entry name" value="ATP-synt"/>
    <property type="match status" value="1"/>
</dbReference>
<dbReference type="PRINTS" id="PR00126">
    <property type="entry name" value="ATPASEGAMMA"/>
</dbReference>
<dbReference type="SUPFAM" id="SSF52943">
    <property type="entry name" value="ATP synthase (F1-ATPase), gamma subunit"/>
    <property type="match status" value="1"/>
</dbReference>
<dbReference type="PROSITE" id="PS00153">
    <property type="entry name" value="ATPASE_GAMMA"/>
    <property type="match status" value="1"/>
</dbReference>
<name>ATPG_MYCBT</name>
<protein>
    <recommendedName>
        <fullName evidence="1">ATP synthase gamma chain</fullName>
    </recommendedName>
    <alternativeName>
        <fullName evidence="1">ATP synthase F1 sector gamma subunit</fullName>
    </alternativeName>
    <alternativeName>
        <fullName evidence="1">F-ATPase gamma subunit</fullName>
    </alternativeName>
</protein>